<organism>
    <name type="scientific">Staphylococcus aureus (strain USA300 / TCH1516)</name>
    <dbReference type="NCBI Taxonomy" id="451516"/>
    <lineage>
        <taxon>Bacteria</taxon>
        <taxon>Bacillati</taxon>
        <taxon>Bacillota</taxon>
        <taxon>Bacilli</taxon>
        <taxon>Bacillales</taxon>
        <taxon>Staphylococcaceae</taxon>
        <taxon>Staphylococcus</taxon>
    </lineage>
</organism>
<name>SYH_STAAT</name>
<reference key="1">
    <citation type="journal article" date="2007" name="BMC Microbiol.">
        <title>Subtle genetic changes enhance virulence of methicillin resistant and sensitive Staphylococcus aureus.</title>
        <authorList>
            <person name="Highlander S.K."/>
            <person name="Hulten K.G."/>
            <person name="Qin X."/>
            <person name="Jiang H."/>
            <person name="Yerrapragada S."/>
            <person name="Mason E.O. Jr."/>
            <person name="Shang Y."/>
            <person name="Williams T.M."/>
            <person name="Fortunov R.M."/>
            <person name="Liu Y."/>
            <person name="Igboeli O."/>
            <person name="Petrosino J."/>
            <person name="Tirumalai M."/>
            <person name="Uzman A."/>
            <person name="Fox G.E."/>
            <person name="Cardenas A.M."/>
            <person name="Muzny D.M."/>
            <person name="Hemphill L."/>
            <person name="Ding Y."/>
            <person name="Dugan S."/>
            <person name="Blyth P.R."/>
            <person name="Buhay C.J."/>
            <person name="Dinh H.H."/>
            <person name="Hawes A.C."/>
            <person name="Holder M."/>
            <person name="Kovar C.L."/>
            <person name="Lee S.L."/>
            <person name="Liu W."/>
            <person name="Nazareth L.V."/>
            <person name="Wang Q."/>
            <person name="Zhou J."/>
            <person name="Kaplan S.L."/>
            <person name="Weinstock G.M."/>
        </authorList>
    </citation>
    <scope>NUCLEOTIDE SEQUENCE [LARGE SCALE GENOMIC DNA]</scope>
    <source>
        <strain>USA300 / TCH1516</strain>
    </source>
</reference>
<protein>
    <recommendedName>
        <fullName evidence="1">Histidine--tRNA ligase</fullName>
        <ecNumber evidence="1">6.1.1.21</ecNumber>
    </recommendedName>
    <alternativeName>
        <fullName evidence="1">Histidyl-tRNA synthetase</fullName>
        <shortName evidence="1">HisRS</shortName>
    </alternativeName>
</protein>
<evidence type="ECO:0000255" key="1">
    <source>
        <dbReference type="HAMAP-Rule" id="MF_00127"/>
    </source>
</evidence>
<keyword id="KW-0030">Aminoacyl-tRNA synthetase</keyword>
<keyword id="KW-0067">ATP-binding</keyword>
<keyword id="KW-0963">Cytoplasm</keyword>
<keyword id="KW-0436">Ligase</keyword>
<keyword id="KW-0547">Nucleotide-binding</keyword>
<keyword id="KW-0648">Protein biosynthesis</keyword>
<accession>A8Z2F8</accession>
<proteinExistence type="inferred from homology"/>
<dbReference type="EC" id="6.1.1.21" evidence="1"/>
<dbReference type="EMBL" id="CP000730">
    <property type="protein sequence ID" value="ABX29636.1"/>
    <property type="molecule type" value="Genomic_DNA"/>
</dbReference>
<dbReference type="RefSeq" id="WP_000590826.1">
    <property type="nucleotide sequence ID" value="NC_010079.1"/>
</dbReference>
<dbReference type="SMR" id="A8Z2F8"/>
<dbReference type="KEGG" id="sax:USA300HOU_1629"/>
<dbReference type="HOGENOM" id="CLU_025113_1_1_9"/>
<dbReference type="GO" id="GO:0005737">
    <property type="term" value="C:cytoplasm"/>
    <property type="evidence" value="ECO:0007669"/>
    <property type="project" value="UniProtKB-SubCell"/>
</dbReference>
<dbReference type="GO" id="GO:0005524">
    <property type="term" value="F:ATP binding"/>
    <property type="evidence" value="ECO:0007669"/>
    <property type="project" value="UniProtKB-UniRule"/>
</dbReference>
<dbReference type="GO" id="GO:0140096">
    <property type="term" value="F:catalytic activity, acting on a protein"/>
    <property type="evidence" value="ECO:0007669"/>
    <property type="project" value="UniProtKB-ARBA"/>
</dbReference>
<dbReference type="GO" id="GO:0004821">
    <property type="term" value="F:histidine-tRNA ligase activity"/>
    <property type="evidence" value="ECO:0007669"/>
    <property type="project" value="UniProtKB-UniRule"/>
</dbReference>
<dbReference type="GO" id="GO:0016740">
    <property type="term" value="F:transferase activity"/>
    <property type="evidence" value="ECO:0007669"/>
    <property type="project" value="UniProtKB-ARBA"/>
</dbReference>
<dbReference type="GO" id="GO:0006427">
    <property type="term" value="P:histidyl-tRNA aminoacylation"/>
    <property type="evidence" value="ECO:0007669"/>
    <property type="project" value="UniProtKB-UniRule"/>
</dbReference>
<dbReference type="CDD" id="cd00738">
    <property type="entry name" value="HGTP_anticodon"/>
    <property type="match status" value="1"/>
</dbReference>
<dbReference type="CDD" id="cd00773">
    <property type="entry name" value="HisRS-like_core"/>
    <property type="match status" value="1"/>
</dbReference>
<dbReference type="FunFam" id="3.30.930.10:FF:000005">
    <property type="entry name" value="Histidine--tRNA ligase"/>
    <property type="match status" value="1"/>
</dbReference>
<dbReference type="Gene3D" id="3.40.50.800">
    <property type="entry name" value="Anticodon-binding domain"/>
    <property type="match status" value="1"/>
</dbReference>
<dbReference type="Gene3D" id="3.30.930.10">
    <property type="entry name" value="Bira Bifunctional Protein, Domain 2"/>
    <property type="match status" value="1"/>
</dbReference>
<dbReference type="HAMAP" id="MF_00127">
    <property type="entry name" value="His_tRNA_synth"/>
    <property type="match status" value="1"/>
</dbReference>
<dbReference type="InterPro" id="IPR006195">
    <property type="entry name" value="aa-tRNA-synth_II"/>
</dbReference>
<dbReference type="InterPro" id="IPR045864">
    <property type="entry name" value="aa-tRNA-synth_II/BPL/LPL"/>
</dbReference>
<dbReference type="InterPro" id="IPR004154">
    <property type="entry name" value="Anticodon-bd"/>
</dbReference>
<dbReference type="InterPro" id="IPR036621">
    <property type="entry name" value="Anticodon-bd_dom_sf"/>
</dbReference>
<dbReference type="InterPro" id="IPR015807">
    <property type="entry name" value="His-tRNA-ligase"/>
</dbReference>
<dbReference type="InterPro" id="IPR041715">
    <property type="entry name" value="HisRS-like_core"/>
</dbReference>
<dbReference type="InterPro" id="IPR004516">
    <property type="entry name" value="HisRS/HisZ"/>
</dbReference>
<dbReference type="NCBIfam" id="TIGR00442">
    <property type="entry name" value="hisS"/>
    <property type="match status" value="1"/>
</dbReference>
<dbReference type="PANTHER" id="PTHR43707:SF1">
    <property type="entry name" value="HISTIDINE--TRNA LIGASE, MITOCHONDRIAL-RELATED"/>
    <property type="match status" value="1"/>
</dbReference>
<dbReference type="PANTHER" id="PTHR43707">
    <property type="entry name" value="HISTIDYL-TRNA SYNTHETASE"/>
    <property type="match status" value="1"/>
</dbReference>
<dbReference type="Pfam" id="PF03129">
    <property type="entry name" value="HGTP_anticodon"/>
    <property type="match status" value="1"/>
</dbReference>
<dbReference type="Pfam" id="PF13393">
    <property type="entry name" value="tRNA-synt_His"/>
    <property type="match status" value="1"/>
</dbReference>
<dbReference type="PIRSF" id="PIRSF001549">
    <property type="entry name" value="His-tRNA_synth"/>
    <property type="match status" value="1"/>
</dbReference>
<dbReference type="SUPFAM" id="SSF52954">
    <property type="entry name" value="Class II aaRS ABD-related"/>
    <property type="match status" value="1"/>
</dbReference>
<dbReference type="SUPFAM" id="SSF55681">
    <property type="entry name" value="Class II aaRS and biotin synthetases"/>
    <property type="match status" value="1"/>
</dbReference>
<dbReference type="PROSITE" id="PS50862">
    <property type="entry name" value="AA_TRNA_LIGASE_II"/>
    <property type="match status" value="1"/>
</dbReference>
<sequence length="420" mass="48283">MIKIPRGTQDILPEDSKKWRYIENQLDELMTFYNYKEIRTPIFESTDLFARGVGDSTDVVQKEMYTFKDKGDRSITLRPEGTAAVVRSYIEHKMQGNPNQPIKLYYNGPMFRYERKQKGRYRQFNQFGVEAIGAENPSVDAEVLAMVMHIYQSFGLKHLKLVINSVGDMASRKEYNEALVKHFEPVIHEFCSDCQSRLHTNPMRILDCKVDRDKEAIKTAPRITDFLNEESKAYYEQVKAYLDDLGIPYIEDPNLVRGLDYYTHTAFELMMDNPNYDGAITTLCGGGRYNGLLELLDGPSETGIGFALSIERLLLALEEEGIELDIEENLDLFIVTMGDQADRYAVKLLNHLRHNGIKADKDYLQRKIKGQMKQADRLGAKFTIVIGDQELENNKIDVKNMTTGESETIELDALVEYFKK</sequence>
<feature type="chain" id="PRO_1000076292" description="Histidine--tRNA ligase">
    <location>
        <begin position="1"/>
        <end position="420"/>
    </location>
</feature>
<comment type="catalytic activity">
    <reaction evidence="1">
        <text>tRNA(His) + L-histidine + ATP = L-histidyl-tRNA(His) + AMP + diphosphate + H(+)</text>
        <dbReference type="Rhea" id="RHEA:17313"/>
        <dbReference type="Rhea" id="RHEA-COMP:9665"/>
        <dbReference type="Rhea" id="RHEA-COMP:9689"/>
        <dbReference type="ChEBI" id="CHEBI:15378"/>
        <dbReference type="ChEBI" id="CHEBI:30616"/>
        <dbReference type="ChEBI" id="CHEBI:33019"/>
        <dbReference type="ChEBI" id="CHEBI:57595"/>
        <dbReference type="ChEBI" id="CHEBI:78442"/>
        <dbReference type="ChEBI" id="CHEBI:78527"/>
        <dbReference type="ChEBI" id="CHEBI:456215"/>
        <dbReference type="EC" id="6.1.1.21"/>
    </reaction>
</comment>
<comment type="subunit">
    <text evidence="1">Homodimer.</text>
</comment>
<comment type="subcellular location">
    <subcellularLocation>
        <location evidence="1">Cytoplasm</location>
    </subcellularLocation>
</comment>
<comment type="similarity">
    <text evidence="1">Belongs to the class-II aminoacyl-tRNA synthetase family.</text>
</comment>
<gene>
    <name evidence="1" type="primary">hisS</name>
    <name type="ordered locus">USA300HOU_1629</name>
</gene>